<gene>
    <name evidence="5" type="primary">RAD52-1</name>
    <name evidence="6" type="synonym">ODB1</name>
    <name evidence="8" type="ordered locus">At1g71310</name>
    <name evidence="9" type="ORF">F3I17.4</name>
</gene>
<evidence type="ECO:0000255" key="1"/>
<evidence type="ECO:0000269" key="2">
    <source>
    </source>
</evidence>
<evidence type="ECO:0000269" key="3">
    <source>
    </source>
</evidence>
<evidence type="ECO:0000269" key="4">
    <source>
    </source>
</evidence>
<evidence type="ECO:0000303" key="5">
    <source>
    </source>
</evidence>
<evidence type="ECO:0000303" key="6">
    <source>
    </source>
</evidence>
<evidence type="ECO:0000305" key="7"/>
<evidence type="ECO:0000312" key="8">
    <source>
        <dbReference type="Araport" id="AT1G71310"/>
    </source>
</evidence>
<evidence type="ECO:0000312" key="9">
    <source>
        <dbReference type="EMBL" id="AAG51886.1"/>
    </source>
</evidence>
<comment type="function">
    <text evidence="2 3 4">Plant-specific single-stranded DNA-binding protein required for efficient heterologous recombination-dependent DNA repair in nuclear and mitochondrial compartments. Forms large nucleo-protein complexes with WHY2 in mitochondria. Binds ssDNA with high affinity, but with little sequence specificity (PubMed:22762281). Involved in double-stranded DNA break repair (PubMed:22202891). Involved in the hydrolytic splicing pathway in mitochondrion. Facilitates the excision of two cis-spliced group II introns, NAD1 intron 2 and NAD2 intron 1 (PubMed:26048959).</text>
</comment>
<comment type="subunit">
    <text evidence="3">Interacts with WHY2.</text>
</comment>
<comment type="subcellular location">
    <subcellularLocation>
        <location evidence="2 3 4">Mitochondrion</location>
    </subcellularLocation>
    <subcellularLocation>
        <location evidence="2">Nucleus</location>
    </subcellularLocation>
</comment>
<comment type="alternative products">
    <event type="alternative splicing"/>
    <isoform>
        <id>Q9FVV7-1</id>
        <name>1</name>
        <sequence type="displayed"/>
    </isoform>
    <text evidence="7">A number of isoforms are produced. According to EST sequences.</text>
</comment>
<comment type="tissue specificity">
    <text evidence="3">Expressed in root vascular tissue, tips of primary and secondary roots, young leaves, hydathodes, stomatal guard cells, cauline leaves, flower buds, stipules, carpels, pistils and anther filaments.</text>
</comment>
<comment type="disruption phenotype">
    <text evidence="4">Reduced fertility, increased sensitivity to mitomycin C, and decreased levels of intrachromosomal recombination.</text>
</comment>
<comment type="similarity">
    <text evidence="7">Belongs to the RAD52 family.</text>
</comment>
<name>RD521_ARATH</name>
<sequence length="176" mass="19484">MAGLGLRLKAAKWTLRSGSGAVSREWSSEMGKGVRRFSTETENDVPTSGISRPLAEILKELNKKVPDSVIRTRVEDGCSIKYIPWHIVNRIMNMHAPEWSGEVRSVTYSPDGNTVTVAYRVTLYGTDAEIFRESTGTTSVDDKGYGDAVQKAEAMAFRRACARFGLGLHLYHEDAL</sequence>
<accession>Q9FVV7</accession>
<organism>
    <name type="scientific">Arabidopsis thaliana</name>
    <name type="common">Mouse-ear cress</name>
    <dbReference type="NCBI Taxonomy" id="3702"/>
    <lineage>
        <taxon>Eukaryota</taxon>
        <taxon>Viridiplantae</taxon>
        <taxon>Streptophyta</taxon>
        <taxon>Embryophyta</taxon>
        <taxon>Tracheophyta</taxon>
        <taxon>Spermatophyta</taxon>
        <taxon>Magnoliopsida</taxon>
        <taxon>eudicotyledons</taxon>
        <taxon>Gunneridae</taxon>
        <taxon>Pentapetalae</taxon>
        <taxon>rosids</taxon>
        <taxon>malvids</taxon>
        <taxon>Brassicales</taxon>
        <taxon>Brassicaceae</taxon>
        <taxon>Camelineae</taxon>
        <taxon>Arabidopsis</taxon>
    </lineage>
</organism>
<keyword id="KW-0025">Alternative splicing</keyword>
<keyword id="KW-0227">DNA damage</keyword>
<keyword id="KW-0233">DNA recombination</keyword>
<keyword id="KW-0234">DNA repair</keyword>
<keyword id="KW-0238">DNA-binding</keyword>
<keyword id="KW-0496">Mitochondrion</keyword>
<keyword id="KW-0539">Nucleus</keyword>
<keyword id="KW-1185">Reference proteome</keyword>
<keyword id="KW-0809">Transit peptide</keyword>
<reference key="1">
    <citation type="journal article" date="2000" name="Nature">
        <title>Sequence and analysis of chromosome 1 of the plant Arabidopsis thaliana.</title>
        <authorList>
            <person name="Theologis A."/>
            <person name="Ecker J.R."/>
            <person name="Palm C.J."/>
            <person name="Federspiel N.A."/>
            <person name="Kaul S."/>
            <person name="White O."/>
            <person name="Alonso J."/>
            <person name="Altafi H."/>
            <person name="Araujo R."/>
            <person name="Bowman C.L."/>
            <person name="Brooks S.Y."/>
            <person name="Buehler E."/>
            <person name="Chan A."/>
            <person name="Chao Q."/>
            <person name="Chen H."/>
            <person name="Cheuk R.F."/>
            <person name="Chin C.W."/>
            <person name="Chung M.K."/>
            <person name="Conn L."/>
            <person name="Conway A.B."/>
            <person name="Conway A.R."/>
            <person name="Creasy T.H."/>
            <person name="Dewar K."/>
            <person name="Dunn P."/>
            <person name="Etgu P."/>
            <person name="Feldblyum T.V."/>
            <person name="Feng J.-D."/>
            <person name="Fong B."/>
            <person name="Fujii C.Y."/>
            <person name="Gill J.E."/>
            <person name="Goldsmith A.D."/>
            <person name="Haas B."/>
            <person name="Hansen N.F."/>
            <person name="Hughes B."/>
            <person name="Huizar L."/>
            <person name="Hunter J.L."/>
            <person name="Jenkins J."/>
            <person name="Johnson-Hopson C."/>
            <person name="Khan S."/>
            <person name="Khaykin E."/>
            <person name="Kim C.J."/>
            <person name="Koo H.L."/>
            <person name="Kremenetskaia I."/>
            <person name="Kurtz D.B."/>
            <person name="Kwan A."/>
            <person name="Lam B."/>
            <person name="Langin-Hooper S."/>
            <person name="Lee A."/>
            <person name="Lee J.M."/>
            <person name="Lenz C.A."/>
            <person name="Li J.H."/>
            <person name="Li Y.-P."/>
            <person name="Lin X."/>
            <person name="Liu S.X."/>
            <person name="Liu Z.A."/>
            <person name="Luros J.S."/>
            <person name="Maiti R."/>
            <person name="Marziali A."/>
            <person name="Militscher J."/>
            <person name="Miranda M."/>
            <person name="Nguyen M."/>
            <person name="Nierman W.C."/>
            <person name="Osborne B.I."/>
            <person name="Pai G."/>
            <person name="Peterson J."/>
            <person name="Pham P.K."/>
            <person name="Rizzo M."/>
            <person name="Rooney T."/>
            <person name="Rowley D."/>
            <person name="Sakano H."/>
            <person name="Salzberg S.L."/>
            <person name="Schwartz J.R."/>
            <person name="Shinn P."/>
            <person name="Southwick A.M."/>
            <person name="Sun H."/>
            <person name="Tallon L.J."/>
            <person name="Tambunga G."/>
            <person name="Toriumi M.J."/>
            <person name="Town C.D."/>
            <person name="Utterback T."/>
            <person name="Van Aken S."/>
            <person name="Vaysberg M."/>
            <person name="Vysotskaia V.S."/>
            <person name="Walker M."/>
            <person name="Wu D."/>
            <person name="Yu G."/>
            <person name="Fraser C.M."/>
            <person name="Venter J.C."/>
            <person name="Davis R.W."/>
        </authorList>
    </citation>
    <scope>NUCLEOTIDE SEQUENCE [LARGE SCALE GENOMIC DNA]</scope>
    <source>
        <strain>cv. Columbia</strain>
    </source>
</reference>
<reference key="2">
    <citation type="journal article" date="2017" name="Plant J.">
        <title>Araport11: a complete reannotation of the Arabidopsis thaliana reference genome.</title>
        <authorList>
            <person name="Cheng C.Y."/>
            <person name="Krishnakumar V."/>
            <person name="Chan A.P."/>
            <person name="Thibaud-Nissen F."/>
            <person name="Schobel S."/>
            <person name="Town C.D."/>
        </authorList>
    </citation>
    <scope>GENOME REANNOTATION</scope>
    <source>
        <strain>cv. Columbia</strain>
    </source>
</reference>
<reference key="3">
    <citation type="journal article" date="2003" name="Science">
        <title>Empirical analysis of transcriptional activity in the Arabidopsis genome.</title>
        <authorList>
            <person name="Yamada K."/>
            <person name="Lim J."/>
            <person name="Dale J.M."/>
            <person name="Chen H."/>
            <person name="Shinn P."/>
            <person name="Palm C.J."/>
            <person name="Southwick A.M."/>
            <person name="Wu H.C."/>
            <person name="Kim C.J."/>
            <person name="Nguyen M."/>
            <person name="Pham P.K."/>
            <person name="Cheuk R.F."/>
            <person name="Karlin-Newmann G."/>
            <person name="Liu S.X."/>
            <person name="Lam B."/>
            <person name="Sakano H."/>
            <person name="Wu T."/>
            <person name="Yu G."/>
            <person name="Miranda M."/>
            <person name="Quach H.L."/>
            <person name="Tripp M."/>
            <person name="Chang C.H."/>
            <person name="Lee J.M."/>
            <person name="Toriumi M.J."/>
            <person name="Chan M.M."/>
            <person name="Tang C.C."/>
            <person name="Onodera C.S."/>
            <person name="Deng J.M."/>
            <person name="Akiyama K."/>
            <person name="Ansari Y."/>
            <person name="Arakawa T."/>
            <person name="Banh J."/>
            <person name="Banno F."/>
            <person name="Bowser L."/>
            <person name="Brooks S.Y."/>
            <person name="Carninci P."/>
            <person name="Chao Q."/>
            <person name="Choy N."/>
            <person name="Enju A."/>
            <person name="Goldsmith A.D."/>
            <person name="Gurjal M."/>
            <person name="Hansen N.F."/>
            <person name="Hayashizaki Y."/>
            <person name="Johnson-Hopson C."/>
            <person name="Hsuan V.W."/>
            <person name="Iida K."/>
            <person name="Karnes M."/>
            <person name="Khan S."/>
            <person name="Koesema E."/>
            <person name="Ishida J."/>
            <person name="Jiang P.X."/>
            <person name="Jones T."/>
            <person name="Kawai J."/>
            <person name="Kamiya A."/>
            <person name="Meyers C."/>
            <person name="Nakajima M."/>
            <person name="Narusaka M."/>
            <person name="Seki M."/>
            <person name="Sakurai T."/>
            <person name="Satou M."/>
            <person name="Tamse R."/>
            <person name="Vaysberg M."/>
            <person name="Wallender E.K."/>
            <person name="Wong C."/>
            <person name="Yamamura Y."/>
            <person name="Yuan S."/>
            <person name="Shinozaki K."/>
            <person name="Davis R.W."/>
            <person name="Theologis A."/>
            <person name="Ecker J.R."/>
        </authorList>
    </citation>
    <scope>NUCLEOTIDE SEQUENCE [LARGE SCALE MRNA]</scope>
    <source>
        <strain>cv. Columbia</strain>
    </source>
</reference>
<reference key="4">
    <citation type="journal article" date="2011" name="Plant Cell">
        <title>Identification of plant RAD52 homologs and characterization of the Arabidopsis thaliana RAD52-like genes.</title>
        <authorList>
            <person name="Samach A."/>
            <person name="Melamed-Bessudo C."/>
            <person name="Avivi-Ragolski N."/>
            <person name="Pietrokovski S."/>
            <person name="Levy A.A."/>
        </authorList>
    </citation>
    <scope>FUNCTION</scope>
    <scope>SUBCELLULAR LOCATION</scope>
    <scope>DISRUPTION PHENOTYPE</scope>
</reference>
<reference key="5">
    <citation type="journal article" date="2012" name="Plant J.">
        <title>A RAD52-like single-stranded DNA binding protein affects mitochondrial DNA repair by recombination.</title>
        <authorList>
            <person name="Janicka S."/>
            <person name="Kuehn K."/>
            <person name="Le Ret M."/>
            <person name="Bonnard G."/>
            <person name="Imbault P."/>
            <person name="Augustyniak H."/>
            <person name="Gualberto J.M."/>
        </authorList>
    </citation>
    <scope>FUNCTION</scope>
    <scope>INTERACTION WITH WHY2</scope>
    <scope>SUBCELLULAR LOCATION</scope>
    <scope>TISSUE SPECIFICITY</scope>
</reference>
<reference key="6">
    <citation type="journal article" date="2015" name="Nucleic Acids Res.">
        <title>The RAD52-like protein ODB1 is required for the efficient excision of two mitochondrial introns spliced via first-step hydrolysis.</title>
        <authorList>
            <person name="Gualberto J.M."/>
            <person name="Le Ret M."/>
            <person name="Beator B."/>
            <person name="Kuehn K."/>
        </authorList>
    </citation>
    <scope>FUNCTION</scope>
    <scope>SUBCELLULAR LOCATION</scope>
</reference>
<dbReference type="EMBL" id="AC016162">
    <property type="protein sequence ID" value="AAG51886.1"/>
    <property type="molecule type" value="Genomic_DNA"/>
</dbReference>
<dbReference type="EMBL" id="CP002684">
    <property type="protein sequence ID" value="AEE35186.1"/>
    <property type="molecule type" value="Genomic_DNA"/>
</dbReference>
<dbReference type="EMBL" id="CP002684">
    <property type="protein sequence ID" value="AEE35187.1"/>
    <property type="molecule type" value="Genomic_DNA"/>
</dbReference>
<dbReference type="EMBL" id="AY128372">
    <property type="protein sequence ID" value="AAM91575.1"/>
    <property type="molecule type" value="mRNA"/>
</dbReference>
<dbReference type="EMBL" id="BT000380">
    <property type="protein sequence ID" value="AAN15699.1"/>
    <property type="molecule type" value="mRNA"/>
</dbReference>
<dbReference type="PIR" id="H96737">
    <property type="entry name" value="H96737"/>
</dbReference>
<dbReference type="RefSeq" id="NP_177287.1">
    <molecule id="Q9FVV7-1"/>
    <property type="nucleotide sequence ID" value="NM_105800.2"/>
</dbReference>
<dbReference type="RefSeq" id="NP_849876.1">
    <molecule id="Q9FVV7-1"/>
    <property type="nucleotide sequence ID" value="NM_179545.3"/>
</dbReference>
<dbReference type="SMR" id="Q9FVV7"/>
<dbReference type="FunCoup" id="Q9FVV7">
    <property type="interactions" value="1325"/>
</dbReference>
<dbReference type="STRING" id="3702.Q9FVV7"/>
<dbReference type="PaxDb" id="3702-AT1G71310.1"/>
<dbReference type="ProteomicsDB" id="225952">
    <molecule id="Q9FVV7-1"/>
</dbReference>
<dbReference type="EnsemblPlants" id="AT1G71310.1">
    <molecule id="Q9FVV7-1"/>
    <property type="protein sequence ID" value="AT1G71310.1"/>
    <property type="gene ID" value="AT1G71310"/>
</dbReference>
<dbReference type="EnsemblPlants" id="AT1G71310.2">
    <molecule id="Q9FVV7-1"/>
    <property type="protein sequence ID" value="AT1G71310.2"/>
    <property type="gene ID" value="AT1G71310"/>
</dbReference>
<dbReference type="GeneID" id="843472"/>
<dbReference type="Gramene" id="AT1G71310.1">
    <molecule id="Q9FVV7-1"/>
    <property type="protein sequence ID" value="AT1G71310.1"/>
    <property type="gene ID" value="AT1G71310"/>
</dbReference>
<dbReference type="Gramene" id="AT1G71310.2">
    <molecule id="Q9FVV7-1"/>
    <property type="protein sequence ID" value="AT1G71310.2"/>
    <property type="gene ID" value="AT1G71310"/>
</dbReference>
<dbReference type="KEGG" id="ath:AT1G71310"/>
<dbReference type="Araport" id="AT1G71310"/>
<dbReference type="TAIR" id="AT1G71310">
    <property type="gene designation" value="RAD52-1"/>
</dbReference>
<dbReference type="eggNOG" id="ENOG502RXQN">
    <property type="taxonomic scope" value="Eukaryota"/>
</dbReference>
<dbReference type="HOGENOM" id="CLU_095139_1_0_1"/>
<dbReference type="InParanoid" id="Q9FVV7"/>
<dbReference type="OMA" id="RTWSWET"/>
<dbReference type="OrthoDB" id="1935514at2759"/>
<dbReference type="PhylomeDB" id="Q9FVV7"/>
<dbReference type="CD-CODE" id="4299E36E">
    <property type="entry name" value="Nucleolus"/>
</dbReference>
<dbReference type="PRO" id="PR:Q9FVV7"/>
<dbReference type="Proteomes" id="UP000006548">
    <property type="component" value="Chromosome 1"/>
</dbReference>
<dbReference type="ExpressionAtlas" id="Q9FVV7">
    <property type="expression patterns" value="baseline and differential"/>
</dbReference>
<dbReference type="GO" id="GO:0005739">
    <property type="term" value="C:mitochondrion"/>
    <property type="evidence" value="ECO:0000314"/>
    <property type="project" value="TAIR"/>
</dbReference>
<dbReference type="GO" id="GO:0005634">
    <property type="term" value="C:nucleus"/>
    <property type="evidence" value="ECO:0000314"/>
    <property type="project" value="TAIR"/>
</dbReference>
<dbReference type="GO" id="GO:0050897">
    <property type="term" value="F:cobalt ion binding"/>
    <property type="evidence" value="ECO:0007005"/>
    <property type="project" value="TAIR"/>
</dbReference>
<dbReference type="GO" id="GO:0003690">
    <property type="term" value="F:double-stranded DNA binding"/>
    <property type="evidence" value="ECO:0000314"/>
    <property type="project" value="TAIR"/>
</dbReference>
<dbReference type="GO" id="GO:0003697">
    <property type="term" value="F:single-stranded DNA binding"/>
    <property type="evidence" value="ECO:0000314"/>
    <property type="project" value="TAIR"/>
</dbReference>
<dbReference type="GO" id="GO:0006281">
    <property type="term" value="P:DNA repair"/>
    <property type="evidence" value="ECO:0000315"/>
    <property type="project" value="TAIR"/>
</dbReference>
<dbReference type="GO" id="GO:0000724">
    <property type="term" value="P:double-strand break repair via homologous recombination"/>
    <property type="evidence" value="ECO:0000315"/>
    <property type="project" value="TAIR"/>
</dbReference>
<dbReference type="GO" id="GO:0000373">
    <property type="term" value="P:Group II intron splicing"/>
    <property type="evidence" value="ECO:0000315"/>
    <property type="project" value="UniProtKB"/>
</dbReference>
<dbReference type="Gene3D" id="3.30.390.80">
    <property type="entry name" value="DNA repair protein Rad52/59/22"/>
    <property type="match status" value="1"/>
</dbReference>
<dbReference type="InterPro" id="IPR037489">
    <property type="entry name" value="RAD52-like"/>
</dbReference>
<dbReference type="InterPro" id="IPR042525">
    <property type="entry name" value="Rad52_Rad59_Rad22_sf"/>
</dbReference>
<dbReference type="PANTHER" id="PTHR34050:SF1">
    <property type="entry name" value="DNA REPAIR RAD52-LIKE PROTEIN 1, MITOCHONDRIAL"/>
    <property type="match status" value="1"/>
</dbReference>
<dbReference type="PANTHER" id="PTHR34050">
    <property type="entry name" value="DNA REPAIR RAD52-LIKE PROTEIN 2, CHLOROPLASTIC"/>
    <property type="match status" value="1"/>
</dbReference>
<feature type="transit peptide" description="Mitochondrion" evidence="1">
    <location>
        <begin position="1"/>
        <end position="37"/>
    </location>
</feature>
<feature type="chain" id="PRO_0000438186" description="DNA repair RAD52-like protein 1, mitochondrial">
    <location>
        <begin position="38"/>
        <end position="176"/>
    </location>
</feature>
<protein>
    <recommendedName>
        <fullName evidence="7">DNA repair RAD52-like protein 1, mitochondrial</fullName>
    </recommendedName>
    <alternativeName>
        <fullName evidence="6">Organellar DNA-binding protein 1</fullName>
    </alternativeName>
</protein>
<proteinExistence type="evidence at protein level"/>